<sequence length="128" mass="14461">MAYRKLGRTSSQRKAVLRDLTTDLIINEAIVTTEARAKEIRKTVEKMITLGKRGDLHARRQAAAFVRNEIASESYDEATDKYTSTTALQKLFSEIAPRYTERNGGYTRILKTEPRRGDAAPMAIIELV</sequence>
<evidence type="ECO:0000255" key="1">
    <source>
        <dbReference type="HAMAP-Rule" id="MF_01368"/>
    </source>
</evidence>
<evidence type="ECO:0000305" key="2"/>
<protein>
    <recommendedName>
        <fullName evidence="1">Large ribosomal subunit protein bL17</fullName>
    </recommendedName>
    <alternativeName>
        <fullName evidence="2">50S ribosomal protein L17</fullName>
    </alternativeName>
</protein>
<dbReference type="EMBL" id="CP000023">
    <property type="protein sequence ID" value="AAV61505.1"/>
    <property type="molecule type" value="Genomic_DNA"/>
</dbReference>
<dbReference type="RefSeq" id="WP_002952134.1">
    <property type="nucleotide sequence ID" value="NC_006448.1"/>
</dbReference>
<dbReference type="SMR" id="Q5M2E0"/>
<dbReference type="STRING" id="264199.stu1907"/>
<dbReference type="GeneID" id="66899635"/>
<dbReference type="KEGG" id="stl:stu1907"/>
<dbReference type="eggNOG" id="COG0203">
    <property type="taxonomic scope" value="Bacteria"/>
</dbReference>
<dbReference type="HOGENOM" id="CLU_074407_2_2_9"/>
<dbReference type="Proteomes" id="UP000001170">
    <property type="component" value="Chromosome"/>
</dbReference>
<dbReference type="GO" id="GO:0022625">
    <property type="term" value="C:cytosolic large ribosomal subunit"/>
    <property type="evidence" value="ECO:0007669"/>
    <property type="project" value="TreeGrafter"/>
</dbReference>
<dbReference type="GO" id="GO:0003735">
    <property type="term" value="F:structural constituent of ribosome"/>
    <property type="evidence" value="ECO:0007669"/>
    <property type="project" value="InterPro"/>
</dbReference>
<dbReference type="GO" id="GO:0006412">
    <property type="term" value="P:translation"/>
    <property type="evidence" value="ECO:0007669"/>
    <property type="project" value="UniProtKB-UniRule"/>
</dbReference>
<dbReference type="FunFam" id="3.90.1030.10:FF:000002">
    <property type="entry name" value="50S ribosomal protein L17"/>
    <property type="match status" value="1"/>
</dbReference>
<dbReference type="Gene3D" id="3.90.1030.10">
    <property type="entry name" value="Ribosomal protein L17"/>
    <property type="match status" value="1"/>
</dbReference>
<dbReference type="HAMAP" id="MF_01368">
    <property type="entry name" value="Ribosomal_bL17"/>
    <property type="match status" value="1"/>
</dbReference>
<dbReference type="InterPro" id="IPR000456">
    <property type="entry name" value="Ribosomal_bL17"/>
</dbReference>
<dbReference type="InterPro" id="IPR047859">
    <property type="entry name" value="Ribosomal_bL17_CS"/>
</dbReference>
<dbReference type="InterPro" id="IPR036373">
    <property type="entry name" value="Ribosomal_bL17_sf"/>
</dbReference>
<dbReference type="NCBIfam" id="TIGR00059">
    <property type="entry name" value="L17"/>
    <property type="match status" value="1"/>
</dbReference>
<dbReference type="PANTHER" id="PTHR14413:SF16">
    <property type="entry name" value="LARGE RIBOSOMAL SUBUNIT PROTEIN BL17M"/>
    <property type="match status" value="1"/>
</dbReference>
<dbReference type="PANTHER" id="PTHR14413">
    <property type="entry name" value="RIBOSOMAL PROTEIN L17"/>
    <property type="match status" value="1"/>
</dbReference>
<dbReference type="Pfam" id="PF01196">
    <property type="entry name" value="Ribosomal_L17"/>
    <property type="match status" value="1"/>
</dbReference>
<dbReference type="SUPFAM" id="SSF64263">
    <property type="entry name" value="Prokaryotic ribosomal protein L17"/>
    <property type="match status" value="1"/>
</dbReference>
<dbReference type="PROSITE" id="PS01167">
    <property type="entry name" value="RIBOSOMAL_L17"/>
    <property type="match status" value="1"/>
</dbReference>
<proteinExistence type="inferred from homology"/>
<accession>Q5M2E0</accession>
<name>RL17_STRT2</name>
<feature type="chain" id="PRO_1000055972" description="Large ribosomal subunit protein bL17">
    <location>
        <begin position="1"/>
        <end position="128"/>
    </location>
</feature>
<comment type="subunit">
    <text evidence="1">Part of the 50S ribosomal subunit. Contacts protein L32.</text>
</comment>
<comment type="similarity">
    <text evidence="1">Belongs to the bacterial ribosomal protein bL17 family.</text>
</comment>
<keyword id="KW-1185">Reference proteome</keyword>
<keyword id="KW-0687">Ribonucleoprotein</keyword>
<keyword id="KW-0689">Ribosomal protein</keyword>
<organism>
    <name type="scientific">Streptococcus thermophilus (strain ATCC BAA-250 / LMG 18311)</name>
    <dbReference type="NCBI Taxonomy" id="264199"/>
    <lineage>
        <taxon>Bacteria</taxon>
        <taxon>Bacillati</taxon>
        <taxon>Bacillota</taxon>
        <taxon>Bacilli</taxon>
        <taxon>Lactobacillales</taxon>
        <taxon>Streptococcaceae</taxon>
        <taxon>Streptococcus</taxon>
    </lineage>
</organism>
<gene>
    <name evidence="1" type="primary">rplQ</name>
    <name type="ordered locus">stu1907</name>
</gene>
<reference key="1">
    <citation type="journal article" date="2004" name="Nat. Biotechnol.">
        <title>Complete sequence and comparative genome analysis of the dairy bacterium Streptococcus thermophilus.</title>
        <authorList>
            <person name="Bolotin A."/>
            <person name="Quinquis B."/>
            <person name="Renault P."/>
            <person name="Sorokin A."/>
            <person name="Ehrlich S.D."/>
            <person name="Kulakauskas S."/>
            <person name="Lapidus A."/>
            <person name="Goltsman E."/>
            <person name="Mazur M."/>
            <person name="Pusch G.D."/>
            <person name="Fonstein M."/>
            <person name="Overbeek R."/>
            <person name="Kyprides N."/>
            <person name="Purnelle B."/>
            <person name="Prozzi D."/>
            <person name="Ngui K."/>
            <person name="Masuy D."/>
            <person name="Hancy F."/>
            <person name="Burteau S."/>
            <person name="Boutry M."/>
            <person name="Delcour J."/>
            <person name="Goffeau A."/>
            <person name="Hols P."/>
        </authorList>
    </citation>
    <scope>NUCLEOTIDE SEQUENCE [LARGE SCALE GENOMIC DNA]</scope>
    <source>
        <strain>ATCC BAA-250 / LMG 18311</strain>
    </source>
</reference>